<reference key="1">
    <citation type="journal article" date="2002" name="Nature">
        <title>Genome sequence of the plant pathogen Ralstonia solanacearum.</title>
        <authorList>
            <person name="Salanoubat M."/>
            <person name="Genin S."/>
            <person name="Artiguenave F."/>
            <person name="Gouzy J."/>
            <person name="Mangenot S."/>
            <person name="Arlat M."/>
            <person name="Billault A."/>
            <person name="Brottier P."/>
            <person name="Camus J.-C."/>
            <person name="Cattolico L."/>
            <person name="Chandler M."/>
            <person name="Choisne N."/>
            <person name="Claudel-Renard C."/>
            <person name="Cunnac S."/>
            <person name="Demange N."/>
            <person name="Gaspin C."/>
            <person name="Lavie M."/>
            <person name="Moisan A."/>
            <person name="Robert C."/>
            <person name="Saurin W."/>
            <person name="Schiex T."/>
            <person name="Siguier P."/>
            <person name="Thebault P."/>
            <person name="Whalen M."/>
            <person name="Wincker P."/>
            <person name="Levy M."/>
            <person name="Weissenbach J."/>
            <person name="Boucher C.A."/>
        </authorList>
    </citation>
    <scope>NUCLEOTIDE SEQUENCE [LARGE SCALE GENOMIC DNA]</scope>
    <source>
        <strain>ATCC BAA-1114 / GMI1000</strain>
    </source>
</reference>
<accession>Q8Y1H8</accession>
<name>RISB_RALN1</name>
<gene>
    <name evidence="1" type="primary">ribH</name>
    <name type="ordered locus">RSc0712</name>
    <name type="ORF">RS05141</name>
</gene>
<dbReference type="EC" id="2.5.1.78" evidence="1"/>
<dbReference type="EMBL" id="AL646052">
    <property type="protein sequence ID" value="CAD14242.1"/>
    <property type="molecule type" value="Genomic_DNA"/>
</dbReference>
<dbReference type="RefSeq" id="WP_011000667.1">
    <property type="nucleotide sequence ID" value="NC_003295.1"/>
</dbReference>
<dbReference type="SMR" id="Q8Y1H8"/>
<dbReference type="STRING" id="267608.RSc0712"/>
<dbReference type="EnsemblBacteria" id="CAD14242">
    <property type="protein sequence ID" value="CAD14242"/>
    <property type="gene ID" value="RSc0712"/>
</dbReference>
<dbReference type="KEGG" id="rso:RSc0712"/>
<dbReference type="eggNOG" id="COG0054">
    <property type="taxonomic scope" value="Bacteria"/>
</dbReference>
<dbReference type="HOGENOM" id="CLU_089358_1_2_4"/>
<dbReference type="BRENDA" id="2.5.1.78">
    <property type="organism ID" value="5176"/>
</dbReference>
<dbReference type="UniPathway" id="UPA00275">
    <property type="reaction ID" value="UER00404"/>
</dbReference>
<dbReference type="Proteomes" id="UP000001436">
    <property type="component" value="Chromosome"/>
</dbReference>
<dbReference type="GO" id="GO:0005829">
    <property type="term" value="C:cytosol"/>
    <property type="evidence" value="ECO:0007669"/>
    <property type="project" value="TreeGrafter"/>
</dbReference>
<dbReference type="GO" id="GO:0009349">
    <property type="term" value="C:riboflavin synthase complex"/>
    <property type="evidence" value="ECO:0007669"/>
    <property type="project" value="InterPro"/>
</dbReference>
<dbReference type="GO" id="GO:0000906">
    <property type="term" value="F:6,7-dimethyl-8-ribityllumazine synthase activity"/>
    <property type="evidence" value="ECO:0007669"/>
    <property type="project" value="UniProtKB-UniRule"/>
</dbReference>
<dbReference type="GO" id="GO:0009231">
    <property type="term" value="P:riboflavin biosynthetic process"/>
    <property type="evidence" value="ECO:0007669"/>
    <property type="project" value="UniProtKB-UniRule"/>
</dbReference>
<dbReference type="CDD" id="cd09209">
    <property type="entry name" value="Lumazine_synthase-I"/>
    <property type="match status" value="1"/>
</dbReference>
<dbReference type="Gene3D" id="3.40.50.960">
    <property type="entry name" value="Lumazine/riboflavin synthase"/>
    <property type="match status" value="1"/>
</dbReference>
<dbReference type="HAMAP" id="MF_00178">
    <property type="entry name" value="Lumazine_synth"/>
    <property type="match status" value="1"/>
</dbReference>
<dbReference type="InterPro" id="IPR034964">
    <property type="entry name" value="LS"/>
</dbReference>
<dbReference type="InterPro" id="IPR002180">
    <property type="entry name" value="LS/RS"/>
</dbReference>
<dbReference type="InterPro" id="IPR036467">
    <property type="entry name" value="LS/RS_sf"/>
</dbReference>
<dbReference type="NCBIfam" id="TIGR00114">
    <property type="entry name" value="lumazine-synth"/>
    <property type="match status" value="1"/>
</dbReference>
<dbReference type="PANTHER" id="PTHR21058:SF0">
    <property type="entry name" value="6,7-DIMETHYL-8-RIBITYLLUMAZINE SYNTHASE"/>
    <property type="match status" value="1"/>
</dbReference>
<dbReference type="PANTHER" id="PTHR21058">
    <property type="entry name" value="6,7-DIMETHYL-8-RIBITYLLUMAZINE SYNTHASE DMRL SYNTHASE LUMAZINE SYNTHASE"/>
    <property type="match status" value="1"/>
</dbReference>
<dbReference type="Pfam" id="PF00885">
    <property type="entry name" value="DMRL_synthase"/>
    <property type="match status" value="1"/>
</dbReference>
<dbReference type="SUPFAM" id="SSF52121">
    <property type="entry name" value="Lumazine synthase"/>
    <property type="match status" value="1"/>
</dbReference>
<proteinExistence type="inferred from homology"/>
<organism>
    <name type="scientific">Ralstonia nicotianae (strain ATCC BAA-1114 / GMI1000)</name>
    <name type="common">Ralstonia solanacearum</name>
    <dbReference type="NCBI Taxonomy" id="267608"/>
    <lineage>
        <taxon>Bacteria</taxon>
        <taxon>Pseudomonadati</taxon>
        <taxon>Pseudomonadota</taxon>
        <taxon>Betaproteobacteria</taxon>
        <taxon>Burkholderiales</taxon>
        <taxon>Burkholderiaceae</taxon>
        <taxon>Ralstonia</taxon>
        <taxon>Ralstonia solanacearum species complex</taxon>
    </lineage>
</organism>
<sequence>MDHGFYPTNLEGEGLRIGIVQARFNEPVCEALREACVAELEQLGVAGEDVLLVTVPGALEVPLALQKMAESGQFDALIALGAVIRGETYHFELVSNESGAGITRVCLDFNIAIANGILTTDTDAQAHARTREKGRDCARTAIEMANLTAALDGLQDHGQDDENE</sequence>
<protein>
    <recommendedName>
        <fullName evidence="1">6,7-dimethyl-8-ribityllumazine synthase</fullName>
        <shortName evidence="1">DMRL synthase</shortName>
        <shortName evidence="1">LS</shortName>
        <shortName evidence="1">Lumazine synthase</shortName>
        <ecNumber evidence="1">2.5.1.78</ecNumber>
    </recommendedName>
</protein>
<keyword id="KW-1185">Reference proteome</keyword>
<keyword id="KW-0686">Riboflavin biosynthesis</keyword>
<keyword id="KW-0808">Transferase</keyword>
<evidence type="ECO:0000255" key="1">
    <source>
        <dbReference type="HAMAP-Rule" id="MF_00178"/>
    </source>
</evidence>
<feature type="chain" id="PRO_0000134791" description="6,7-dimethyl-8-ribityllumazine synthase">
    <location>
        <begin position="1"/>
        <end position="164"/>
    </location>
</feature>
<feature type="active site" description="Proton donor" evidence="1">
    <location>
        <position position="90"/>
    </location>
</feature>
<feature type="binding site" evidence="1">
    <location>
        <position position="24"/>
    </location>
    <ligand>
        <name>5-amino-6-(D-ribitylamino)uracil</name>
        <dbReference type="ChEBI" id="CHEBI:15934"/>
    </ligand>
</feature>
<feature type="binding site" evidence="1">
    <location>
        <begin position="58"/>
        <end position="60"/>
    </location>
    <ligand>
        <name>5-amino-6-(D-ribitylamino)uracil</name>
        <dbReference type="ChEBI" id="CHEBI:15934"/>
    </ligand>
</feature>
<feature type="binding site" evidence="1">
    <location>
        <begin position="82"/>
        <end position="84"/>
    </location>
    <ligand>
        <name>5-amino-6-(D-ribitylamino)uracil</name>
        <dbReference type="ChEBI" id="CHEBI:15934"/>
    </ligand>
</feature>
<feature type="binding site" evidence="1">
    <location>
        <begin position="87"/>
        <end position="88"/>
    </location>
    <ligand>
        <name>(2S)-2-hydroxy-3-oxobutyl phosphate</name>
        <dbReference type="ChEBI" id="CHEBI:58830"/>
    </ligand>
</feature>
<feature type="binding site" evidence="1">
    <location>
        <position position="115"/>
    </location>
    <ligand>
        <name>5-amino-6-(D-ribitylamino)uracil</name>
        <dbReference type="ChEBI" id="CHEBI:15934"/>
    </ligand>
</feature>
<feature type="binding site" evidence="1">
    <location>
        <position position="129"/>
    </location>
    <ligand>
        <name>(2S)-2-hydroxy-3-oxobutyl phosphate</name>
        <dbReference type="ChEBI" id="CHEBI:58830"/>
    </ligand>
</feature>
<comment type="function">
    <text evidence="1">Catalyzes the formation of 6,7-dimethyl-8-ribityllumazine by condensation of 5-amino-6-(D-ribitylamino)uracil with 3,4-dihydroxy-2-butanone 4-phosphate. This is the penultimate step in the biosynthesis of riboflavin.</text>
</comment>
<comment type="catalytic activity">
    <reaction evidence="1">
        <text>(2S)-2-hydroxy-3-oxobutyl phosphate + 5-amino-6-(D-ribitylamino)uracil = 6,7-dimethyl-8-(1-D-ribityl)lumazine + phosphate + 2 H2O + H(+)</text>
        <dbReference type="Rhea" id="RHEA:26152"/>
        <dbReference type="ChEBI" id="CHEBI:15377"/>
        <dbReference type="ChEBI" id="CHEBI:15378"/>
        <dbReference type="ChEBI" id="CHEBI:15934"/>
        <dbReference type="ChEBI" id="CHEBI:43474"/>
        <dbReference type="ChEBI" id="CHEBI:58201"/>
        <dbReference type="ChEBI" id="CHEBI:58830"/>
        <dbReference type="EC" id="2.5.1.78"/>
    </reaction>
</comment>
<comment type="pathway">
    <text evidence="1">Cofactor biosynthesis; riboflavin biosynthesis; riboflavin from 2-hydroxy-3-oxobutyl phosphate and 5-amino-6-(D-ribitylamino)uracil: step 1/2.</text>
</comment>
<comment type="similarity">
    <text evidence="1">Belongs to the DMRL synthase family.</text>
</comment>